<sequence length="402" mass="43927">MESKDWVAGISKSDAGRYSRQLLVDDFGVSGQKNLKNTAVLIVGAGGLGCPVATYLGAAGVGTLGIVDYDRISLDNLHRQVAYKEDQVGQSKSQGLADNVKLQNSGVTTVVHNVSLDSSNAMEIFKNYDIVCDCTDNVATRYLINDVCVLLNIPLVSGSALRWDGQLSVYHYGPDCPCYRCLFPSPPDPSSVTNCNEGGVLGPIVGTIGSMQALEVMKIAAKLSTTLAGKLLLFDGREGKSRTIRLRKRDPKCAVCGDEPSITAPIDYMLFCGAGAHDKIENLKLLEPSVRVNVHEYQEIRSAARKQFLLDTRPPVEFEIAHLPEAIDITLNECRSLQAEELSSRLGVDSQTSDVYVICHRGNDSQRAVKLLKEKLGSIHFRDIIGGYEEWALKINDEFPLY</sequence>
<accession>A8WRE3</accession>
<reference key="1">
    <citation type="journal article" date="2003" name="PLoS Biol.">
        <title>The genome sequence of Caenorhabditis briggsae: a platform for comparative genomics.</title>
        <authorList>
            <person name="Stein L.D."/>
            <person name="Bao Z."/>
            <person name="Blasiar D."/>
            <person name="Blumenthal T."/>
            <person name="Brent M.R."/>
            <person name="Chen N."/>
            <person name="Chinwalla A."/>
            <person name="Clarke L."/>
            <person name="Clee C."/>
            <person name="Coghlan A."/>
            <person name="Coulson A."/>
            <person name="D'Eustachio P."/>
            <person name="Fitch D.H.A."/>
            <person name="Fulton L.A."/>
            <person name="Fulton R.E."/>
            <person name="Griffiths-Jones S."/>
            <person name="Harris T.W."/>
            <person name="Hillier L.W."/>
            <person name="Kamath R."/>
            <person name="Kuwabara P.E."/>
            <person name="Mardis E.R."/>
            <person name="Marra M.A."/>
            <person name="Miner T.L."/>
            <person name="Minx P."/>
            <person name="Mullikin J.C."/>
            <person name="Plumb R.W."/>
            <person name="Rogers J."/>
            <person name="Schein J.E."/>
            <person name="Sohrmann M."/>
            <person name="Spieth J."/>
            <person name="Stajich J.E."/>
            <person name="Wei C."/>
            <person name="Willey D."/>
            <person name="Wilson R.K."/>
            <person name="Durbin R.M."/>
            <person name="Waterston R.H."/>
        </authorList>
    </citation>
    <scope>NUCLEOTIDE SEQUENCE [LARGE SCALE GENOMIC DNA]</scope>
    <source>
        <strain>AF16</strain>
    </source>
</reference>
<feature type="chain" id="PRO_0000369197" description="Adenylyltransferase and sulfurtransferase MOCS3">
    <location>
        <begin position="1"/>
        <end position="402"/>
    </location>
</feature>
<feature type="domain" description="Rhodanese" evidence="2">
    <location>
        <begin position="303"/>
        <end position="400"/>
    </location>
</feature>
<feature type="active site" description="Glycyl thioester intermediate; for adenylyltransferase activity" evidence="2">
    <location>
        <position position="195"/>
    </location>
</feature>
<feature type="active site" description="Cysteine persulfide intermediate; for sulfurtransferase activity" evidence="2">
    <location>
        <position position="359"/>
    </location>
</feature>
<feature type="binding site" evidence="2">
    <location>
        <position position="47"/>
    </location>
    <ligand>
        <name>ATP</name>
        <dbReference type="ChEBI" id="CHEBI:30616"/>
    </ligand>
</feature>
<feature type="binding site" evidence="2">
    <location>
        <position position="68"/>
    </location>
    <ligand>
        <name>ATP</name>
        <dbReference type="ChEBI" id="CHEBI:30616"/>
    </ligand>
</feature>
<feature type="binding site" evidence="2">
    <location>
        <begin position="75"/>
        <end position="79"/>
    </location>
    <ligand>
        <name>ATP</name>
        <dbReference type="ChEBI" id="CHEBI:30616"/>
    </ligand>
</feature>
<feature type="binding site" evidence="2">
    <location>
        <position position="92"/>
    </location>
    <ligand>
        <name>ATP</name>
        <dbReference type="ChEBI" id="CHEBI:30616"/>
    </ligand>
</feature>
<feature type="binding site" evidence="2">
    <location>
        <begin position="136"/>
        <end position="137"/>
    </location>
    <ligand>
        <name>ATP</name>
        <dbReference type="ChEBI" id="CHEBI:30616"/>
    </ligand>
</feature>
<feature type="binding site" evidence="2">
    <location>
        <position position="178"/>
    </location>
    <ligand>
        <name>Zn(2+)</name>
        <dbReference type="ChEBI" id="CHEBI:29105"/>
    </ligand>
</feature>
<feature type="binding site" evidence="2">
    <location>
        <position position="181"/>
    </location>
    <ligand>
        <name>Zn(2+)</name>
        <dbReference type="ChEBI" id="CHEBI:29105"/>
    </ligand>
</feature>
<feature type="binding site" evidence="2">
    <location>
        <position position="253"/>
    </location>
    <ligand>
        <name>Zn(2+)</name>
        <dbReference type="ChEBI" id="CHEBI:29105"/>
    </ligand>
</feature>
<feature type="binding site" evidence="2">
    <location>
        <position position="256"/>
    </location>
    <ligand>
        <name>Zn(2+)</name>
        <dbReference type="ChEBI" id="CHEBI:29105"/>
    </ligand>
</feature>
<name>MOCS3_CAEBR</name>
<comment type="function">
    <text evidence="2">Plays a central role in 2-thiolation of mcm(5)S(2)U at tRNA wobble positions of cytosolic tRNA(Lys), tRNA(Glu) and tRNA(Gln). Also essential during biosynthesis of the molybdenum cofactor. Acts by mediating the C-terminal thiocarboxylation of sulfur carriers URM1 and MOCS2A. Its N-terminus first activates URM1 and MOCS2A as acyl-adenylates (-COAMP), then the persulfide sulfur on the catalytic cysteine is transferred to URM1 and MOCS2A to form thiocarboxylation (-COSH) of their C-terminus. The reaction probably involves hydrogen sulfide that is generated from the persulfide intermediate and that acts as a nucleophile towards URM1 and MOCS2A. Subsequently, a transient disulfide bond is formed. Does not use thiosulfate as sulfur donor; NFS1 probably acting as a sulfur donor for thiocarboxylation reactions.</text>
</comment>
<comment type="catalytic activity">
    <reaction evidence="2">
        <text>[molybdopterin-synthase sulfur-carrier protein]-C-terminal Gly-Gly + ATP + H(+) = [molybdopterin-synthase sulfur-carrier protein]-C-terminal Gly-Gly-AMP + diphosphate</text>
        <dbReference type="Rhea" id="RHEA:43616"/>
        <dbReference type="Rhea" id="RHEA-COMP:12159"/>
        <dbReference type="Rhea" id="RHEA-COMP:12202"/>
        <dbReference type="ChEBI" id="CHEBI:15378"/>
        <dbReference type="ChEBI" id="CHEBI:30616"/>
        <dbReference type="ChEBI" id="CHEBI:33019"/>
        <dbReference type="ChEBI" id="CHEBI:90618"/>
        <dbReference type="ChEBI" id="CHEBI:90778"/>
        <dbReference type="EC" id="2.7.7.80"/>
    </reaction>
</comment>
<comment type="catalytic activity">
    <reaction evidence="2">
        <text>[molybdopterin-synthase sulfur-carrier protein]-C-terminal Gly-Gly-AMP + S-sulfanyl-L-cysteinyl-[cysteine desulfurase] + AH2 = [molybdopterin-synthase sulfur-carrier protein]-C-terminal-Gly-aminoethanethioate + L-cysteinyl-[cysteine desulfurase] + A + AMP + 2 H(+)</text>
        <dbReference type="Rhea" id="RHEA:48612"/>
        <dbReference type="Rhea" id="RHEA-COMP:12157"/>
        <dbReference type="Rhea" id="RHEA-COMP:12158"/>
        <dbReference type="Rhea" id="RHEA-COMP:12159"/>
        <dbReference type="Rhea" id="RHEA-COMP:19907"/>
        <dbReference type="ChEBI" id="CHEBI:13193"/>
        <dbReference type="ChEBI" id="CHEBI:15378"/>
        <dbReference type="ChEBI" id="CHEBI:17499"/>
        <dbReference type="ChEBI" id="CHEBI:29950"/>
        <dbReference type="ChEBI" id="CHEBI:61963"/>
        <dbReference type="ChEBI" id="CHEBI:90618"/>
        <dbReference type="ChEBI" id="CHEBI:232372"/>
        <dbReference type="ChEBI" id="CHEBI:456215"/>
        <dbReference type="EC" id="2.8.1.11"/>
    </reaction>
</comment>
<comment type="cofactor">
    <cofactor evidence="2">
        <name>Zn(2+)</name>
        <dbReference type="ChEBI" id="CHEBI:29105"/>
    </cofactor>
    <text evidence="2">Binds 1 zinc ion per subunit.</text>
</comment>
<comment type="pathway">
    <text evidence="2">tRNA modification; 5-methoxycarbonylmethyl-2-thiouridine-tRNA biosynthesis.</text>
</comment>
<comment type="pathway">
    <text evidence="2">Cofactor biosynthesis; molybdopterin biosynthesis.</text>
</comment>
<comment type="subcellular location">
    <subcellularLocation>
        <location evidence="1">Cytoplasm</location>
        <location evidence="1">Cytosol</location>
    </subcellularLocation>
</comment>
<comment type="similarity">
    <text evidence="2">In the N-terminal section; belongs to the HesA/MoeB/ThiF family. UBA4 subfamily.</text>
</comment>
<comment type="sequence caution" evidence="3">
    <conflict type="erroneous gene model prediction">
        <sequence resource="EMBL-CDS" id="CAP23051"/>
    </conflict>
</comment>
<keyword id="KW-0067">ATP-binding</keyword>
<keyword id="KW-0963">Cytoplasm</keyword>
<keyword id="KW-0479">Metal-binding</keyword>
<keyword id="KW-0501">Molybdenum cofactor biosynthesis</keyword>
<keyword id="KW-0511">Multifunctional enzyme</keyword>
<keyword id="KW-0547">Nucleotide-binding</keyword>
<keyword id="KW-0548">Nucleotidyltransferase</keyword>
<keyword id="KW-1185">Reference proteome</keyword>
<keyword id="KW-0808">Transferase</keyword>
<keyword id="KW-0819">tRNA processing</keyword>
<keyword id="KW-0862">Zinc</keyword>
<proteinExistence type="inferred from homology"/>
<evidence type="ECO:0000250" key="1">
    <source>
        <dbReference type="UniProtKB" id="O95396"/>
    </source>
</evidence>
<evidence type="ECO:0000255" key="2">
    <source>
        <dbReference type="HAMAP-Rule" id="MF_03049"/>
    </source>
</evidence>
<evidence type="ECO:0000305" key="3"/>
<evidence type="ECO:0000312" key="4">
    <source>
        <dbReference type="WormBase" id="CBG01549"/>
    </source>
</evidence>
<dbReference type="EC" id="2.7.7.80" evidence="2"/>
<dbReference type="EC" id="2.8.1.11" evidence="2"/>
<dbReference type="EMBL" id="HE601298">
    <property type="protein sequence ID" value="CAP23051.2"/>
    <property type="status" value="ALT_SEQ"/>
    <property type="molecule type" value="Genomic_DNA"/>
</dbReference>
<dbReference type="SMR" id="A8WRE3"/>
<dbReference type="FunCoup" id="A8WRE3">
    <property type="interactions" value="1581"/>
</dbReference>
<dbReference type="STRING" id="6238.A8WRE3"/>
<dbReference type="WormBase" id="CBG01549">
    <property type="protein sequence ID" value="CBP14176"/>
    <property type="gene ID" value="WBGene00024772"/>
    <property type="gene designation" value="Cbr-moc-3"/>
</dbReference>
<dbReference type="eggNOG" id="KOG2017">
    <property type="taxonomic scope" value="Eukaryota"/>
</dbReference>
<dbReference type="HOGENOM" id="CLU_013325_1_0_1"/>
<dbReference type="InParanoid" id="A8WRE3"/>
<dbReference type="UniPathway" id="UPA00344"/>
<dbReference type="UniPathway" id="UPA00988"/>
<dbReference type="Proteomes" id="UP000008549">
    <property type="component" value="Unassembled WGS sequence"/>
</dbReference>
<dbReference type="GO" id="GO:0005737">
    <property type="term" value="C:cytoplasm"/>
    <property type="evidence" value="ECO:0000318"/>
    <property type="project" value="GO_Central"/>
</dbReference>
<dbReference type="GO" id="GO:0005829">
    <property type="term" value="C:cytosol"/>
    <property type="evidence" value="ECO:0000250"/>
    <property type="project" value="UniProtKB"/>
</dbReference>
<dbReference type="GO" id="GO:0005524">
    <property type="term" value="F:ATP binding"/>
    <property type="evidence" value="ECO:0007669"/>
    <property type="project" value="UniProtKB-KW"/>
</dbReference>
<dbReference type="GO" id="GO:0046872">
    <property type="term" value="F:metal ion binding"/>
    <property type="evidence" value="ECO:0007669"/>
    <property type="project" value="UniProtKB-KW"/>
</dbReference>
<dbReference type="GO" id="GO:0061605">
    <property type="term" value="F:molybdopterin-synthase adenylyltransferase activity"/>
    <property type="evidence" value="ECO:0007669"/>
    <property type="project" value="UniProtKB-EC"/>
</dbReference>
<dbReference type="GO" id="GO:0061604">
    <property type="term" value="F:molybdopterin-synthase sulfurtransferase activity"/>
    <property type="evidence" value="ECO:0000250"/>
    <property type="project" value="UniProtKB"/>
</dbReference>
<dbReference type="GO" id="GO:0016779">
    <property type="term" value="F:nucleotidyltransferase activity"/>
    <property type="evidence" value="ECO:0000318"/>
    <property type="project" value="GO_Central"/>
</dbReference>
<dbReference type="GO" id="GO:0004792">
    <property type="term" value="F:thiosulfate-cyanide sulfurtransferase activity"/>
    <property type="evidence" value="ECO:0000318"/>
    <property type="project" value="GO_Central"/>
</dbReference>
<dbReference type="GO" id="GO:0042292">
    <property type="term" value="F:URM1 activating enzyme activity"/>
    <property type="evidence" value="ECO:0000318"/>
    <property type="project" value="GO_Central"/>
</dbReference>
<dbReference type="GO" id="GO:0006777">
    <property type="term" value="P:Mo-molybdopterin cofactor biosynthetic process"/>
    <property type="evidence" value="ECO:0000250"/>
    <property type="project" value="UniProtKB"/>
</dbReference>
<dbReference type="GO" id="GO:0032447">
    <property type="term" value="P:protein urmylation"/>
    <property type="evidence" value="ECO:0000318"/>
    <property type="project" value="GO_Central"/>
</dbReference>
<dbReference type="GO" id="GO:0002143">
    <property type="term" value="P:tRNA wobble position uridine thiolation"/>
    <property type="evidence" value="ECO:0000318"/>
    <property type="project" value="GO_Central"/>
</dbReference>
<dbReference type="CDD" id="cd00757">
    <property type="entry name" value="ThiF_MoeB_HesA_family"/>
    <property type="match status" value="1"/>
</dbReference>
<dbReference type="FunFam" id="3.40.250.10:FF:000014">
    <property type="entry name" value="Adenylyltransferase and sulfurtransferase MOCS3"/>
    <property type="match status" value="1"/>
</dbReference>
<dbReference type="FunFam" id="3.40.50.720:FF:000033">
    <property type="entry name" value="Adenylyltransferase and sulfurtransferase MOCS3"/>
    <property type="match status" value="1"/>
</dbReference>
<dbReference type="Gene3D" id="3.40.50.720">
    <property type="entry name" value="NAD(P)-binding Rossmann-like Domain"/>
    <property type="match status" value="1"/>
</dbReference>
<dbReference type="Gene3D" id="3.40.250.10">
    <property type="entry name" value="Rhodanese-like domain"/>
    <property type="match status" value="1"/>
</dbReference>
<dbReference type="HAMAP" id="MF_03049">
    <property type="entry name" value="MOCS3_Uba4"/>
    <property type="match status" value="1"/>
</dbReference>
<dbReference type="InterPro" id="IPR028885">
    <property type="entry name" value="MOCS3/Uba4"/>
</dbReference>
<dbReference type="InterPro" id="IPR001763">
    <property type="entry name" value="Rhodanese-like_dom"/>
</dbReference>
<dbReference type="InterPro" id="IPR036873">
    <property type="entry name" value="Rhodanese-like_dom_sf"/>
</dbReference>
<dbReference type="InterPro" id="IPR045886">
    <property type="entry name" value="ThiF/MoeB/HesA"/>
</dbReference>
<dbReference type="InterPro" id="IPR000594">
    <property type="entry name" value="ThiF_NAD_FAD-bd"/>
</dbReference>
<dbReference type="InterPro" id="IPR035985">
    <property type="entry name" value="Ubiquitin-activating_enz"/>
</dbReference>
<dbReference type="NCBIfam" id="NF004281">
    <property type="entry name" value="PRK05690.1"/>
    <property type="match status" value="1"/>
</dbReference>
<dbReference type="PANTHER" id="PTHR10953:SF102">
    <property type="entry name" value="ADENYLYLTRANSFERASE AND SULFURTRANSFERASE MOCS3"/>
    <property type="match status" value="1"/>
</dbReference>
<dbReference type="PANTHER" id="PTHR10953">
    <property type="entry name" value="UBIQUITIN-ACTIVATING ENZYME E1"/>
    <property type="match status" value="1"/>
</dbReference>
<dbReference type="Pfam" id="PF00581">
    <property type="entry name" value="Rhodanese"/>
    <property type="match status" value="1"/>
</dbReference>
<dbReference type="Pfam" id="PF00899">
    <property type="entry name" value="ThiF"/>
    <property type="match status" value="1"/>
</dbReference>
<dbReference type="SMART" id="SM00450">
    <property type="entry name" value="RHOD"/>
    <property type="match status" value="1"/>
</dbReference>
<dbReference type="SUPFAM" id="SSF69572">
    <property type="entry name" value="Activating enzymes of the ubiquitin-like proteins"/>
    <property type="match status" value="1"/>
</dbReference>
<dbReference type="PROSITE" id="PS50206">
    <property type="entry name" value="RHODANESE_3"/>
    <property type="match status" value="1"/>
</dbReference>
<gene>
    <name evidence="4" type="primary">moc-3</name>
    <name evidence="4" type="synonym">uba-4</name>
    <name evidence="4" type="ORF">CBG01549</name>
</gene>
<protein>
    <recommendedName>
        <fullName evidence="2">Adenylyltransferase and sulfurtransferase MOCS3</fullName>
    </recommendedName>
    <alternativeName>
        <fullName evidence="2">Molybdenum cofactor synthesis protein 3</fullName>
    </alternativeName>
    <domain>
        <recommendedName>
            <fullName evidence="2">Molybdopterin-synthase adenylyltransferase</fullName>
            <ecNumber evidence="2">2.7.7.80</ecNumber>
        </recommendedName>
        <alternativeName>
            <fullName evidence="2">Adenylyltransferase MOCS3</fullName>
        </alternativeName>
        <alternativeName>
            <fullName evidence="2">Sulfur carrier protein MOCS2A adenylyltransferase</fullName>
        </alternativeName>
    </domain>
    <domain>
        <recommendedName>
            <fullName evidence="2">Molybdopterin-synthase sulfurtransferase</fullName>
            <ecNumber evidence="2">2.8.1.11</ecNumber>
        </recommendedName>
        <alternativeName>
            <fullName evidence="2">Sulfur carrier protein MOCS2A sulfurtransferase</fullName>
        </alternativeName>
        <alternativeName>
            <fullName evidence="2">Sulfurtransferase MOCS3</fullName>
        </alternativeName>
    </domain>
</protein>
<organism>
    <name type="scientific">Caenorhabditis briggsae</name>
    <dbReference type="NCBI Taxonomy" id="6238"/>
    <lineage>
        <taxon>Eukaryota</taxon>
        <taxon>Metazoa</taxon>
        <taxon>Ecdysozoa</taxon>
        <taxon>Nematoda</taxon>
        <taxon>Chromadorea</taxon>
        <taxon>Rhabditida</taxon>
        <taxon>Rhabditina</taxon>
        <taxon>Rhabditomorpha</taxon>
        <taxon>Rhabditoidea</taxon>
        <taxon>Rhabditidae</taxon>
        <taxon>Peloderinae</taxon>
        <taxon>Caenorhabditis</taxon>
    </lineage>
</organism>